<reference key="1">
    <citation type="submission" date="2008-08" db="EMBL/GenBank/DDBJ databases">
        <title>Complete sequence of Vibrio fischeri strain MJ11.</title>
        <authorList>
            <person name="Mandel M.J."/>
            <person name="Stabb E.V."/>
            <person name="Ruby E.G."/>
            <person name="Ferriera S."/>
            <person name="Johnson J."/>
            <person name="Kravitz S."/>
            <person name="Beeson K."/>
            <person name="Sutton G."/>
            <person name="Rogers Y.-H."/>
            <person name="Friedman R."/>
            <person name="Frazier M."/>
            <person name="Venter J.C."/>
        </authorList>
    </citation>
    <scope>NUCLEOTIDE SEQUENCE [LARGE SCALE GENOMIC DNA]</scope>
    <source>
        <strain>MJ11</strain>
    </source>
</reference>
<gene>
    <name evidence="1" type="primary">rsmC</name>
    <name type="ordered locus">VFMJ11_2245</name>
</gene>
<organism>
    <name type="scientific">Aliivibrio fischeri (strain MJ11)</name>
    <name type="common">Vibrio fischeri</name>
    <dbReference type="NCBI Taxonomy" id="388396"/>
    <lineage>
        <taxon>Bacteria</taxon>
        <taxon>Pseudomonadati</taxon>
        <taxon>Pseudomonadota</taxon>
        <taxon>Gammaproteobacteria</taxon>
        <taxon>Vibrionales</taxon>
        <taxon>Vibrionaceae</taxon>
        <taxon>Aliivibrio</taxon>
    </lineage>
</organism>
<evidence type="ECO:0000255" key="1">
    <source>
        <dbReference type="HAMAP-Rule" id="MF_01862"/>
    </source>
</evidence>
<protein>
    <recommendedName>
        <fullName evidence="1">Ribosomal RNA small subunit methyltransferase C</fullName>
        <ecNumber evidence="1">2.1.1.172</ecNumber>
    </recommendedName>
    <alternativeName>
        <fullName evidence="1">16S rRNA m2G1207 methyltransferase</fullName>
    </alternativeName>
    <alternativeName>
        <fullName evidence="1">rRNA (guanine-N(2)-)-methyltransferase RsmC</fullName>
    </alternativeName>
</protein>
<sequence length="339" mass="38119">MSYSAPSQITQRQLAYFEGKHVLIAGELIDDFPFELAKHCESTSIFTTNYSYYKQFAEHDSIHCYFGSELTETTNADMILLYWPKAKAEAEYLLTMLLAKLGKSTEIVVVGENRSGVKSIEKMFADFGPINKFDSARRCSFYWGQCTEEAPTFNQQDWFKEYQVEFENHTIEVRSLPGVFSHGEFDKGSELLLQTLPALRGHVLDFGCGAGVIGSVMKTINPKIHLDMVDISALAIASSIETLKANNLEGCVFASDVYSDTKENYQFIVSNPPFHAGLKTHYSSTEELLEKAPQNLTHEGQLILVANSFLQYPPIIEKAFGECLTLAKNNKFKIYSAQK</sequence>
<keyword id="KW-0963">Cytoplasm</keyword>
<keyword id="KW-0489">Methyltransferase</keyword>
<keyword id="KW-0698">rRNA processing</keyword>
<keyword id="KW-0949">S-adenosyl-L-methionine</keyword>
<keyword id="KW-0808">Transferase</keyword>
<name>RSMC_ALIFM</name>
<proteinExistence type="inferred from homology"/>
<accession>B5FAM0</accession>
<dbReference type="EC" id="2.1.1.172" evidence="1"/>
<dbReference type="EMBL" id="CP001139">
    <property type="protein sequence ID" value="ACH65964.1"/>
    <property type="molecule type" value="Genomic_DNA"/>
</dbReference>
<dbReference type="RefSeq" id="WP_012533401.1">
    <property type="nucleotide sequence ID" value="NC_011184.1"/>
</dbReference>
<dbReference type="SMR" id="B5FAM0"/>
<dbReference type="KEGG" id="vfm:VFMJ11_2245"/>
<dbReference type="HOGENOM" id="CLU_049581_0_1_6"/>
<dbReference type="Proteomes" id="UP000001857">
    <property type="component" value="Chromosome I"/>
</dbReference>
<dbReference type="GO" id="GO:0005737">
    <property type="term" value="C:cytoplasm"/>
    <property type="evidence" value="ECO:0007669"/>
    <property type="project" value="UniProtKB-SubCell"/>
</dbReference>
<dbReference type="GO" id="GO:0052914">
    <property type="term" value="F:16S rRNA (guanine(1207)-N(2))-methyltransferase activity"/>
    <property type="evidence" value="ECO:0007669"/>
    <property type="project" value="UniProtKB-EC"/>
</dbReference>
<dbReference type="GO" id="GO:0003676">
    <property type="term" value="F:nucleic acid binding"/>
    <property type="evidence" value="ECO:0007669"/>
    <property type="project" value="InterPro"/>
</dbReference>
<dbReference type="CDD" id="cd02440">
    <property type="entry name" value="AdoMet_MTases"/>
    <property type="match status" value="1"/>
</dbReference>
<dbReference type="Gene3D" id="3.40.50.150">
    <property type="entry name" value="Vaccinia Virus protein VP39"/>
    <property type="match status" value="2"/>
</dbReference>
<dbReference type="HAMAP" id="MF_01862">
    <property type="entry name" value="16SrRNA_methyltr_C"/>
    <property type="match status" value="1"/>
</dbReference>
<dbReference type="InterPro" id="IPR002052">
    <property type="entry name" value="DNA_methylase_N6_adenine_CS"/>
</dbReference>
<dbReference type="InterPro" id="IPR013675">
    <property type="entry name" value="Mtase_sm_N"/>
</dbReference>
<dbReference type="InterPro" id="IPR023543">
    <property type="entry name" value="rRNA_ssu_MeTfrase_C"/>
</dbReference>
<dbReference type="InterPro" id="IPR046977">
    <property type="entry name" value="RsmC/RlmG"/>
</dbReference>
<dbReference type="InterPro" id="IPR029063">
    <property type="entry name" value="SAM-dependent_MTases_sf"/>
</dbReference>
<dbReference type="InterPro" id="IPR007848">
    <property type="entry name" value="Small_mtfrase_dom"/>
</dbReference>
<dbReference type="NCBIfam" id="NF007023">
    <property type="entry name" value="PRK09489.1"/>
    <property type="match status" value="1"/>
</dbReference>
<dbReference type="PANTHER" id="PTHR47816">
    <property type="entry name" value="RIBOSOMAL RNA SMALL SUBUNIT METHYLTRANSFERASE C"/>
    <property type="match status" value="1"/>
</dbReference>
<dbReference type="PANTHER" id="PTHR47816:SF4">
    <property type="entry name" value="RIBOSOMAL RNA SMALL SUBUNIT METHYLTRANSFERASE C"/>
    <property type="match status" value="1"/>
</dbReference>
<dbReference type="Pfam" id="PF05175">
    <property type="entry name" value="MTS"/>
    <property type="match status" value="1"/>
</dbReference>
<dbReference type="Pfam" id="PF08468">
    <property type="entry name" value="MTS_N"/>
    <property type="match status" value="1"/>
</dbReference>
<dbReference type="SUPFAM" id="SSF53335">
    <property type="entry name" value="S-adenosyl-L-methionine-dependent methyltransferases"/>
    <property type="match status" value="1"/>
</dbReference>
<comment type="function">
    <text evidence="1">Specifically methylates the guanine in position 1207 of 16S rRNA in the 30S particle.</text>
</comment>
<comment type="catalytic activity">
    <reaction evidence="1">
        <text>guanosine(1207) in 16S rRNA + S-adenosyl-L-methionine = N(2)-methylguanosine(1207) in 16S rRNA + S-adenosyl-L-homocysteine + H(+)</text>
        <dbReference type="Rhea" id="RHEA:42736"/>
        <dbReference type="Rhea" id="RHEA-COMP:10213"/>
        <dbReference type="Rhea" id="RHEA-COMP:10214"/>
        <dbReference type="ChEBI" id="CHEBI:15378"/>
        <dbReference type="ChEBI" id="CHEBI:57856"/>
        <dbReference type="ChEBI" id="CHEBI:59789"/>
        <dbReference type="ChEBI" id="CHEBI:74269"/>
        <dbReference type="ChEBI" id="CHEBI:74481"/>
        <dbReference type="EC" id="2.1.1.172"/>
    </reaction>
</comment>
<comment type="subunit">
    <text evidence="1">Monomer.</text>
</comment>
<comment type="subcellular location">
    <subcellularLocation>
        <location evidence="1">Cytoplasm</location>
    </subcellularLocation>
</comment>
<comment type="similarity">
    <text evidence="1">Belongs to the methyltransferase superfamily. RsmC family.</text>
</comment>
<feature type="chain" id="PRO_0000369794" description="Ribosomal RNA small subunit methyltransferase C">
    <location>
        <begin position="1"/>
        <end position="339"/>
    </location>
</feature>